<dbReference type="EC" id="2.7.4.3" evidence="1"/>
<dbReference type="EMBL" id="DS232375">
    <property type="protein sequence ID" value="EDS40828.1"/>
    <property type="molecule type" value="Genomic_DNA"/>
</dbReference>
<dbReference type="SMR" id="B0X5E3"/>
<dbReference type="FunCoup" id="B0X5E3">
    <property type="interactions" value="1552"/>
</dbReference>
<dbReference type="STRING" id="7176.B0X5E3"/>
<dbReference type="EnsemblMetazoa" id="CPIJ014541-RA">
    <property type="protein sequence ID" value="CPIJ014541-PA"/>
    <property type="gene ID" value="CPIJ014541"/>
</dbReference>
<dbReference type="EnsemblMetazoa" id="CQUJHB013383.R20795">
    <property type="protein sequence ID" value="CQUJHB013383.P20795"/>
    <property type="gene ID" value="CQUJHB013383"/>
</dbReference>
<dbReference type="EnsemblMetazoa" id="XM_001864830.2">
    <property type="protein sequence ID" value="XP_001864865.1"/>
    <property type="gene ID" value="LOC6047866"/>
</dbReference>
<dbReference type="GeneID" id="6047866"/>
<dbReference type="KEGG" id="cqu:CpipJ_CPIJ014541"/>
<dbReference type="CTD" id="204"/>
<dbReference type="VEuPathDB" id="VectorBase:CPIJ014541"/>
<dbReference type="VEuPathDB" id="VectorBase:CQUJHB013383"/>
<dbReference type="eggNOG" id="KOG3078">
    <property type="taxonomic scope" value="Eukaryota"/>
</dbReference>
<dbReference type="HOGENOM" id="CLU_032354_1_0_1"/>
<dbReference type="InParanoid" id="B0X5E3"/>
<dbReference type="OMA" id="HYKVDAA"/>
<dbReference type="OrthoDB" id="439792at2759"/>
<dbReference type="PhylomeDB" id="B0X5E3"/>
<dbReference type="Proteomes" id="UP000002320">
    <property type="component" value="Unassembled WGS sequence"/>
</dbReference>
<dbReference type="GO" id="GO:0005829">
    <property type="term" value="C:cytosol"/>
    <property type="evidence" value="ECO:0007669"/>
    <property type="project" value="UniProtKB-SubCell"/>
</dbReference>
<dbReference type="GO" id="GO:0005758">
    <property type="term" value="C:mitochondrial intermembrane space"/>
    <property type="evidence" value="ECO:0007669"/>
    <property type="project" value="UniProtKB-SubCell"/>
</dbReference>
<dbReference type="GO" id="GO:0004017">
    <property type="term" value="F:adenylate kinase activity"/>
    <property type="evidence" value="ECO:0007669"/>
    <property type="project" value="UniProtKB-UniRule"/>
</dbReference>
<dbReference type="GO" id="GO:0005524">
    <property type="term" value="F:ATP binding"/>
    <property type="evidence" value="ECO:0007669"/>
    <property type="project" value="UniProtKB-KW"/>
</dbReference>
<dbReference type="GO" id="GO:0006172">
    <property type="term" value="P:ADP biosynthetic process"/>
    <property type="evidence" value="ECO:0007669"/>
    <property type="project" value="UniProtKB-UniRule"/>
</dbReference>
<dbReference type="GO" id="GO:0046033">
    <property type="term" value="P:AMP metabolic process"/>
    <property type="evidence" value="ECO:0007669"/>
    <property type="project" value="UniProtKB-UniRule"/>
</dbReference>
<dbReference type="GO" id="GO:0046034">
    <property type="term" value="P:ATP metabolic process"/>
    <property type="evidence" value="ECO:0007669"/>
    <property type="project" value="UniProtKB-UniRule"/>
</dbReference>
<dbReference type="CDD" id="cd01428">
    <property type="entry name" value="ADK"/>
    <property type="match status" value="1"/>
</dbReference>
<dbReference type="FunFam" id="3.40.50.300:FF:000106">
    <property type="entry name" value="Adenylate kinase mitochondrial"/>
    <property type="match status" value="1"/>
</dbReference>
<dbReference type="Gene3D" id="3.40.50.300">
    <property type="entry name" value="P-loop containing nucleotide triphosphate hydrolases"/>
    <property type="match status" value="1"/>
</dbReference>
<dbReference type="HAMAP" id="MF_00235">
    <property type="entry name" value="Adenylate_kinase_Adk"/>
    <property type="match status" value="1"/>
</dbReference>
<dbReference type="HAMAP" id="MF_03168">
    <property type="entry name" value="Adenylate_kinase_AK2"/>
    <property type="match status" value="1"/>
</dbReference>
<dbReference type="InterPro" id="IPR006259">
    <property type="entry name" value="Adenyl_kin_sub"/>
</dbReference>
<dbReference type="InterPro" id="IPR000850">
    <property type="entry name" value="Adenylat/UMP-CMP_kin"/>
</dbReference>
<dbReference type="InterPro" id="IPR033690">
    <property type="entry name" value="Adenylat_kinase_CS"/>
</dbReference>
<dbReference type="InterPro" id="IPR007862">
    <property type="entry name" value="Adenylate_kinase_lid-dom"/>
</dbReference>
<dbReference type="InterPro" id="IPR028587">
    <property type="entry name" value="AK2"/>
</dbReference>
<dbReference type="InterPro" id="IPR027417">
    <property type="entry name" value="P-loop_NTPase"/>
</dbReference>
<dbReference type="NCBIfam" id="TIGR01351">
    <property type="entry name" value="adk"/>
    <property type="match status" value="1"/>
</dbReference>
<dbReference type="NCBIfam" id="NF001381">
    <property type="entry name" value="PRK00279.1-3"/>
    <property type="match status" value="1"/>
</dbReference>
<dbReference type="NCBIfam" id="NF011100">
    <property type="entry name" value="PRK14527.1"/>
    <property type="match status" value="1"/>
</dbReference>
<dbReference type="PANTHER" id="PTHR23359">
    <property type="entry name" value="NUCLEOTIDE KINASE"/>
    <property type="match status" value="1"/>
</dbReference>
<dbReference type="Pfam" id="PF00406">
    <property type="entry name" value="ADK"/>
    <property type="match status" value="1"/>
</dbReference>
<dbReference type="Pfam" id="PF05191">
    <property type="entry name" value="ADK_lid"/>
    <property type="match status" value="1"/>
</dbReference>
<dbReference type="PRINTS" id="PR00094">
    <property type="entry name" value="ADENYLTKNASE"/>
</dbReference>
<dbReference type="SUPFAM" id="SSF52540">
    <property type="entry name" value="P-loop containing nucleoside triphosphate hydrolases"/>
    <property type="match status" value="1"/>
</dbReference>
<dbReference type="PROSITE" id="PS00113">
    <property type="entry name" value="ADENYLATE_KINASE"/>
    <property type="match status" value="1"/>
</dbReference>
<name>KAD2_CULQU</name>
<sequence length="241" mass="26453">MAPTAAVPLAKPSQESPVGINAILLGPPGSGKGTQAPLLKEKFCVCHLSTGDMLRAEIAAGSKIGAQLKKVMDEGKLVSDDLVVDMIDSNLDKPECRNGFLLDGFPRTVVQAEKLDQLLDKRNTGLDAVIEFGIDDSLLVRRITGRLIHQASGRSYHEEFHPPKVAMTDDVTGEPLMRRSDDNAHALVKRLESYHKQTKPLADYYALRGLHFRVDAARSASQVFEHIDSIFMKQRSARLGL</sequence>
<proteinExistence type="inferred from homology"/>
<evidence type="ECO:0000255" key="1">
    <source>
        <dbReference type="HAMAP-Rule" id="MF_03168"/>
    </source>
</evidence>
<protein>
    <recommendedName>
        <fullName evidence="1">Adenylate kinase</fullName>
        <ecNumber evidence="1">2.7.4.3</ecNumber>
    </recommendedName>
    <alternativeName>
        <fullName evidence="1">ATP-AMP transphosphorylase</fullName>
    </alternativeName>
    <alternativeName>
        <fullName evidence="1">ATP:AMP phosphotransferase</fullName>
    </alternativeName>
    <alternativeName>
        <fullName evidence="1">Adenylate kinase cytosolic and mitochondrial</fullName>
    </alternativeName>
    <alternativeName>
        <fullName evidence="1">Adenylate monophosphate kinase</fullName>
    </alternativeName>
</protein>
<reference key="1">
    <citation type="submission" date="2007-03" db="EMBL/GenBank/DDBJ databases">
        <title>Annotation of Culex pipiens quinquefasciatus.</title>
        <authorList>
            <consortium name="The Broad Institute Genome Sequencing Platform"/>
            <person name="Atkinson P.W."/>
            <person name="Hemingway J."/>
            <person name="Christensen B.M."/>
            <person name="Higgs S."/>
            <person name="Kodira C.D."/>
            <person name="Hannick L.I."/>
            <person name="Megy K."/>
            <person name="O'Leary S.B."/>
            <person name="Pearson M."/>
            <person name="Haas B.J."/>
            <person name="Mauceli E."/>
            <person name="Wortman J.R."/>
            <person name="Lee N.H."/>
            <person name="Guigo R."/>
            <person name="Stanke M."/>
            <person name="Alvarado L."/>
            <person name="Amedeo P."/>
            <person name="Antoine C.H."/>
            <person name="Arensburger P."/>
            <person name="Bidwell S.L."/>
            <person name="Crawford M."/>
            <person name="Camaro F."/>
            <person name="Devon K."/>
            <person name="Engels R."/>
            <person name="Hammond M."/>
            <person name="Howarth C."/>
            <person name="Koehrsen M."/>
            <person name="Lawson D."/>
            <person name="Montgomery P."/>
            <person name="Nene V."/>
            <person name="Nusbaum C."/>
            <person name="Puiu D."/>
            <person name="Romero-Severson J."/>
            <person name="Severson D.W."/>
            <person name="Shumway M."/>
            <person name="Sisk P."/>
            <person name="Stolte C."/>
            <person name="Zeng Q."/>
            <person name="Eisenstadt E."/>
            <person name="Fraser-Liggett C.M."/>
            <person name="Strausberg R."/>
            <person name="Galagan J."/>
            <person name="Birren B."/>
            <person name="Collins F.H."/>
        </authorList>
    </citation>
    <scope>NUCLEOTIDE SEQUENCE [LARGE SCALE GENOMIC DNA]</scope>
    <source>
        <strain>JHB</strain>
    </source>
</reference>
<feature type="chain" id="PRO_0000365702" description="Adenylate kinase">
    <location>
        <begin position="1"/>
        <end position="241"/>
    </location>
</feature>
<feature type="region of interest" description="NMP" evidence="1">
    <location>
        <begin position="49"/>
        <end position="78"/>
    </location>
</feature>
<feature type="region of interest" description="LID" evidence="1">
    <location>
        <begin position="145"/>
        <end position="182"/>
    </location>
</feature>
<feature type="binding site" evidence="1">
    <location>
        <begin position="29"/>
        <end position="34"/>
    </location>
    <ligand>
        <name>ATP</name>
        <dbReference type="ChEBI" id="CHEBI:30616"/>
    </ligand>
</feature>
<feature type="binding site" evidence="1">
    <location>
        <position position="50"/>
    </location>
    <ligand>
        <name>AMP</name>
        <dbReference type="ChEBI" id="CHEBI:456215"/>
    </ligand>
</feature>
<feature type="binding site" evidence="1">
    <location>
        <position position="55"/>
    </location>
    <ligand>
        <name>AMP</name>
        <dbReference type="ChEBI" id="CHEBI:456215"/>
    </ligand>
</feature>
<feature type="binding site" evidence="1">
    <location>
        <begin position="76"/>
        <end position="78"/>
    </location>
    <ligand>
        <name>AMP</name>
        <dbReference type="ChEBI" id="CHEBI:456215"/>
    </ligand>
</feature>
<feature type="binding site" evidence="1">
    <location>
        <begin position="104"/>
        <end position="107"/>
    </location>
    <ligand>
        <name>AMP</name>
        <dbReference type="ChEBI" id="CHEBI:456215"/>
    </ligand>
</feature>
<feature type="binding site" evidence="1">
    <location>
        <position position="111"/>
    </location>
    <ligand>
        <name>AMP</name>
        <dbReference type="ChEBI" id="CHEBI:456215"/>
    </ligand>
</feature>
<feature type="binding site" evidence="1">
    <location>
        <position position="146"/>
    </location>
    <ligand>
        <name>ATP</name>
        <dbReference type="ChEBI" id="CHEBI:30616"/>
    </ligand>
</feature>
<feature type="binding site" evidence="1">
    <location>
        <begin position="155"/>
        <end position="156"/>
    </location>
    <ligand>
        <name>ATP</name>
        <dbReference type="ChEBI" id="CHEBI:30616"/>
    </ligand>
</feature>
<feature type="binding site" evidence="1">
    <location>
        <position position="179"/>
    </location>
    <ligand>
        <name>AMP</name>
        <dbReference type="ChEBI" id="CHEBI:456215"/>
    </ligand>
</feature>
<feature type="binding site" evidence="1">
    <location>
        <position position="190"/>
    </location>
    <ligand>
        <name>AMP</name>
        <dbReference type="ChEBI" id="CHEBI:456215"/>
    </ligand>
</feature>
<feature type="binding site" evidence="1">
    <location>
        <position position="218"/>
    </location>
    <ligand>
        <name>ATP</name>
        <dbReference type="ChEBI" id="CHEBI:30616"/>
    </ligand>
</feature>
<comment type="function">
    <text evidence="1">Catalyzes the reversible transfer of the terminal phosphate group between ATP and AMP. Plays an important role in cellular energy homeostasis and in adenine nucleotide metabolism. Adenylate kinase activity is critical for regulation of the phosphate utilization and the AMP de novo biosynthesis pathways.</text>
</comment>
<comment type="catalytic activity">
    <reaction evidence="1">
        <text>AMP + ATP = 2 ADP</text>
        <dbReference type="Rhea" id="RHEA:12973"/>
        <dbReference type="ChEBI" id="CHEBI:30616"/>
        <dbReference type="ChEBI" id="CHEBI:456215"/>
        <dbReference type="ChEBI" id="CHEBI:456216"/>
        <dbReference type="EC" id="2.7.4.3"/>
    </reaction>
</comment>
<comment type="subunit">
    <text evidence="1">Monomer.</text>
</comment>
<comment type="subcellular location">
    <subcellularLocation>
        <location evidence="1">Cytoplasm</location>
        <location evidence="1">Cytosol</location>
    </subcellularLocation>
    <subcellularLocation>
        <location evidence="1">Mitochondrion intermembrane space</location>
    </subcellularLocation>
    <text evidence="1">Predominantly mitochondrial.</text>
</comment>
<comment type="domain">
    <text evidence="1">Consists of three domains, a large central CORE domain and two small peripheral domains, NMPbind and LID, which undergo movements during catalysis. The LID domain closes over the site of phosphoryl transfer upon ATP binding. Assembling and dissambling the active center during each catalytic cycle provides an effective means to prevent ATP hydrolysis.</text>
</comment>
<comment type="similarity">
    <text evidence="1">Belongs to the adenylate kinase family. AK2 subfamily.</text>
</comment>
<organism>
    <name type="scientific">Culex quinquefasciatus</name>
    <name type="common">Southern house mosquito</name>
    <name type="synonym">Culex pungens</name>
    <dbReference type="NCBI Taxonomy" id="7176"/>
    <lineage>
        <taxon>Eukaryota</taxon>
        <taxon>Metazoa</taxon>
        <taxon>Ecdysozoa</taxon>
        <taxon>Arthropoda</taxon>
        <taxon>Hexapoda</taxon>
        <taxon>Insecta</taxon>
        <taxon>Pterygota</taxon>
        <taxon>Neoptera</taxon>
        <taxon>Endopterygota</taxon>
        <taxon>Diptera</taxon>
        <taxon>Nematocera</taxon>
        <taxon>Culicoidea</taxon>
        <taxon>Culicidae</taxon>
        <taxon>Culicinae</taxon>
        <taxon>Culicini</taxon>
        <taxon>Culex</taxon>
        <taxon>Culex</taxon>
    </lineage>
</organism>
<keyword id="KW-0067">ATP-binding</keyword>
<keyword id="KW-0963">Cytoplasm</keyword>
<keyword id="KW-0418">Kinase</keyword>
<keyword id="KW-0496">Mitochondrion</keyword>
<keyword id="KW-0547">Nucleotide-binding</keyword>
<keyword id="KW-1185">Reference proteome</keyword>
<keyword id="KW-0808">Transferase</keyword>
<gene>
    <name evidence="1" type="primary">Adk2</name>
    <name type="ORF">CPIJ014541</name>
</gene>
<accession>B0X5E3</accession>